<organism>
    <name type="scientific">Xylella fastidiosa (strain M23)</name>
    <dbReference type="NCBI Taxonomy" id="405441"/>
    <lineage>
        <taxon>Bacteria</taxon>
        <taxon>Pseudomonadati</taxon>
        <taxon>Pseudomonadota</taxon>
        <taxon>Gammaproteobacteria</taxon>
        <taxon>Lysobacterales</taxon>
        <taxon>Lysobacteraceae</taxon>
        <taxon>Xylella</taxon>
    </lineage>
</organism>
<protein>
    <recommendedName>
        <fullName evidence="1">Co-chaperonin GroES</fullName>
    </recommendedName>
    <alternativeName>
        <fullName evidence="1">10 kDa chaperonin</fullName>
    </alternativeName>
    <alternativeName>
        <fullName evidence="1">Chaperonin-10</fullName>
        <shortName evidence="1">Cpn10</shortName>
    </alternativeName>
</protein>
<reference key="1">
    <citation type="journal article" date="2010" name="J. Bacteriol.">
        <title>Whole genome sequences of two Xylella fastidiosa strains (M12 and M23) causing almond leaf scorch disease in California.</title>
        <authorList>
            <person name="Chen J."/>
            <person name="Xie G."/>
            <person name="Han S."/>
            <person name="Chertkov O."/>
            <person name="Sims D."/>
            <person name="Civerolo E.L."/>
        </authorList>
    </citation>
    <scope>NUCLEOTIDE SEQUENCE [LARGE SCALE GENOMIC DNA]</scope>
    <source>
        <strain>M23</strain>
    </source>
</reference>
<gene>
    <name evidence="1" type="primary">groES</name>
    <name evidence="1" type="synonym">groS</name>
    <name type="ordered locus">XfasM23_1622</name>
</gene>
<accession>B2I7D3</accession>
<sequence length="95" mass="10093">MSIKPLHDRIVVKPIEADEVSPGGIVIPDSAKEKSTKGEVIAVGAGKPLDNGNVRTPCVKVGEKVIYGQYAGSTYKAEGVEYKVLREDDILAIIG</sequence>
<feature type="chain" id="PRO_1000129727" description="Co-chaperonin GroES">
    <location>
        <begin position="1"/>
        <end position="95"/>
    </location>
</feature>
<name>CH10_XYLF2</name>
<comment type="function">
    <text evidence="1">Together with the chaperonin GroEL, plays an essential role in assisting protein folding. The GroEL-GroES system forms a nano-cage that allows encapsulation of the non-native substrate proteins and provides a physical environment optimized to promote and accelerate protein folding. GroES binds to the apical surface of the GroEL ring, thereby capping the opening of the GroEL channel.</text>
</comment>
<comment type="subunit">
    <text evidence="1">Heptamer of 7 subunits arranged in a ring. Interacts with the chaperonin GroEL.</text>
</comment>
<comment type="subcellular location">
    <subcellularLocation>
        <location evidence="1">Cytoplasm</location>
    </subcellularLocation>
</comment>
<comment type="similarity">
    <text evidence="1">Belongs to the GroES chaperonin family.</text>
</comment>
<keyword id="KW-0143">Chaperone</keyword>
<keyword id="KW-0963">Cytoplasm</keyword>
<proteinExistence type="inferred from homology"/>
<evidence type="ECO:0000255" key="1">
    <source>
        <dbReference type="HAMAP-Rule" id="MF_00580"/>
    </source>
</evidence>
<dbReference type="EMBL" id="CP001011">
    <property type="protein sequence ID" value="ACB93030.1"/>
    <property type="molecule type" value="Genomic_DNA"/>
</dbReference>
<dbReference type="RefSeq" id="WP_004088683.1">
    <property type="nucleotide sequence ID" value="NC_010577.1"/>
</dbReference>
<dbReference type="SMR" id="B2I7D3"/>
<dbReference type="KEGG" id="xfn:XfasM23_1622"/>
<dbReference type="HOGENOM" id="CLU_132825_2_0_6"/>
<dbReference type="Proteomes" id="UP000001698">
    <property type="component" value="Chromosome"/>
</dbReference>
<dbReference type="GO" id="GO:0005737">
    <property type="term" value="C:cytoplasm"/>
    <property type="evidence" value="ECO:0007669"/>
    <property type="project" value="UniProtKB-SubCell"/>
</dbReference>
<dbReference type="GO" id="GO:0005524">
    <property type="term" value="F:ATP binding"/>
    <property type="evidence" value="ECO:0007669"/>
    <property type="project" value="InterPro"/>
</dbReference>
<dbReference type="GO" id="GO:0046872">
    <property type="term" value="F:metal ion binding"/>
    <property type="evidence" value="ECO:0007669"/>
    <property type="project" value="TreeGrafter"/>
</dbReference>
<dbReference type="GO" id="GO:0044183">
    <property type="term" value="F:protein folding chaperone"/>
    <property type="evidence" value="ECO:0007669"/>
    <property type="project" value="InterPro"/>
</dbReference>
<dbReference type="GO" id="GO:0051087">
    <property type="term" value="F:protein-folding chaperone binding"/>
    <property type="evidence" value="ECO:0007669"/>
    <property type="project" value="TreeGrafter"/>
</dbReference>
<dbReference type="GO" id="GO:0051082">
    <property type="term" value="F:unfolded protein binding"/>
    <property type="evidence" value="ECO:0007669"/>
    <property type="project" value="TreeGrafter"/>
</dbReference>
<dbReference type="GO" id="GO:0051085">
    <property type="term" value="P:chaperone cofactor-dependent protein refolding"/>
    <property type="evidence" value="ECO:0007669"/>
    <property type="project" value="TreeGrafter"/>
</dbReference>
<dbReference type="CDD" id="cd00320">
    <property type="entry name" value="cpn10"/>
    <property type="match status" value="1"/>
</dbReference>
<dbReference type="FunFam" id="2.30.33.40:FF:000001">
    <property type="entry name" value="10 kDa chaperonin"/>
    <property type="match status" value="1"/>
</dbReference>
<dbReference type="Gene3D" id="2.30.33.40">
    <property type="entry name" value="GroES chaperonin"/>
    <property type="match status" value="1"/>
</dbReference>
<dbReference type="HAMAP" id="MF_00580">
    <property type="entry name" value="CH10"/>
    <property type="match status" value="1"/>
</dbReference>
<dbReference type="InterPro" id="IPR020818">
    <property type="entry name" value="Chaperonin_GroES"/>
</dbReference>
<dbReference type="InterPro" id="IPR037124">
    <property type="entry name" value="Chaperonin_GroES_sf"/>
</dbReference>
<dbReference type="InterPro" id="IPR018369">
    <property type="entry name" value="Chaprnonin_Cpn10_CS"/>
</dbReference>
<dbReference type="InterPro" id="IPR011032">
    <property type="entry name" value="GroES-like_sf"/>
</dbReference>
<dbReference type="NCBIfam" id="NF001527">
    <property type="entry name" value="PRK00364.1-2"/>
    <property type="match status" value="1"/>
</dbReference>
<dbReference type="NCBIfam" id="NF001531">
    <property type="entry name" value="PRK00364.2-2"/>
    <property type="match status" value="1"/>
</dbReference>
<dbReference type="NCBIfam" id="NF001533">
    <property type="entry name" value="PRK00364.2-4"/>
    <property type="match status" value="1"/>
</dbReference>
<dbReference type="PANTHER" id="PTHR10772">
    <property type="entry name" value="10 KDA HEAT SHOCK PROTEIN"/>
    <property type="match status" value="1"/>
</dbReference>
<dbReference type="PANTHER" id="PTHR10772:SF58">
    <property type="entry name" value="CO-CHAPERONIN GROES"/>
    <property type="match status" value="1"/>
</dbReference>
<dbReference type="Pfam" id="PF00166">
    <property type="entry name" value="Cpn10"/>
    <property type="match status" value="1"/>
</dbReference>
<dbReference type="PRINTS" id="PR00297">
    <property type="entry name" value="CHAPERONIN10"/>
</dbReference>
<dbReference type="SMART" id="SM00883">
    <property type="entry name" value="Cpn10"/>
    <property type="match status" value="1"/>
</dbReference>
<dbReference type="SUPFAM" id="SSF50129">
    <property type="entry name" value="GroES-like"/>
    <property type="match status" value="1"/>
</dbReference>
<dbReference type="PROSITE" id="PS00681">
    <property type="entry name" value="CHAPERONINS_CPN10"/>
    <property type="match status" value="1"/>
</dbReference>